<proteinExistence type="inferred from homology"/>
<comment type="function">
    <text evidence="1 5 9 10">C-5 sterol desaturase; part of the third module of ergosterol biosynthesis pathway that includes by the late steps of the pathway (PubMed:18310029). Erg31 and erg32 catalyze the introduction of a C-5 double bond in the B ring to produce 5-dehydroepisterol (By similarity). The third module or late pathway involves the ergosterol synthesis itself through consecutive reactions that mainly occur in the endoplasmic reticulum (ER) membrane. Firstly, the squalene synthase erg9 catalyzes the condensation of 2 farnesyl pyrophosphate moieties to form squalene, which is the precursor of all steroids. Secondly, squalene is converted into lanosterol by the consecutive action of the squalene epoxidase erg1 and the lanosterol synthase erg7. The lanosterol 14-alpha-demethylase erg11/cyp1 catalyzes C14-demethylation of lanosterol to produce 4,4'-dimethyl cholesta-8,14,24-triene-3-beta-ol. In the next steps, a complex process involving various demethylation, reduction and desaturation reactions catalyzed by the C-14 reductase erg24 and the C-4 demethylation complex erg25-erg26-erg27 leads to the production of zymosterol. Erg28 likely functions in the C-4 demethylation complex reaction by tethering erg26 and Erg27 to the endoplasmic reticulum or to facilitate interaction between these proteins. Then, the sterol 24-C-methyltransferase erg6 catalyzes the methyl transfer from S-adenosyl-methionine to the C-24 of zymosterol to form fecosterol. The C-8 sterol isomerase erg2 catalyzes the reaction which results in unsaturation at C-7 in the B ring of sterols and thus converts fecosterol to episterol. The sterol-C5-desaturases erg31 and erg32 then catalyze the introduction of a C-5 double bond in the B ring to produce 5-dehydroepisterol. The C-22 sterol desaturase erg5 further converts 5-dehydroepisterol into ergosta-5,7,22,24(28)-tetraen-3beta-ol by forming the C-22(23) double bond in the sterol side chain. Finally, ergosta-5,7,22,24(28)-tetraen-3beta-ol is substrate of the C-24(28) sterol reductase erg4 to produce ergosterol (Probable) (PubMed:18310029). In the genus Schizosaccharomyces, a second route exists between lanosterol and fecosterol, via the methylation of lanosterol to eburicol by erg6, followed by C14-demethylation by erg11/cyp1 and C4-demethylation by the demethylation complex erg25-erg26-erg27 (Probable) (PubMed:8586261).</text>
</comment>
<comment type="catalytic activity">
    <reaction evidence="1">
        <text>episterol + 2 Fe(II)-[cytochrome b5] + O2 + 2 H(+) = 5-dehydroepisterol + 2 Fe(III)-[cytochrome b5] + 2 H2O</text>
        <dbReference type="Rhea" id="RHEA:46560"/>
        <dbReference type="Rhea" id="RHEA-COMP:10438"/>
        <dbReference type="Rhea" id="RHEA-COMP:10439"/>
        <dbReference type="ChEBI" id="CHEBI:15377"/>
        <dbReference type="ChEBI" id="CHEBI:15378"/>
        <dbReference type="ChEBI" id="CHEBI:15379"/>
        <dbReference type="ChEBI" id="CHEBI:23929"/>
        <dbReference type="ChEBI" id="CHEBI:29033"/>
        <dbReference type="ChEBI" id="CHEBI:29034"/>
        <dbReference type="ChEBI" id="CHEBI:52972"/>
        <dbReference type="EC" id="1.14.19.20"/>
    </reaction>
    <physiologicalReaction direction="left-to-right" evidence="1">
        <dbReference type="Rhea" id="RHEA:46561"/>
    </physiologicalReaction>
</comment>
<comment type="cofactor">
    <cofactor evidence="2">
        <name>Fe cation</name>
        <dbReference type="ChEBI" id="CHEBI:24875"/>
    </cofactor>
</comment>
<comment type="pathway">
    <text evidence="5">Steroid metabolism; ergosterol biosynthesis.</text>
</comment>
<comment type="subcellular location">
    <subcellularLocation>
        <location evidence="4">Endoplasmic reticulum membrane</location>
        <topology evidence="3">Multi-pass membrane protein</topology>
    </subcellularLocation>
    <subcellularLocation>
        <location evidence="4">Golgi apparatus membrane</location>
        <topology evidence="3">Multi-pass membrane protein</topology>
    </subcellularLocation>
</comment>
<comment type="domain">
    <text evidence="2">The histidine box domains may contain the active site and/or be involved in metal ion binding.</text>
</comment>
<comment type="disruption phenotype">
    <text evidence="5">Abolishes the production of ergosterol when erg31 is also deleted (PubMed:18310029). The double disruptant also leads to susceptibility to cycloheximide and to staurosporine, but does not affect tolerance to nystatin and to amphotericin B (PubMed:18310029).</text>
</comment>
<comment type="miscellaneous">
    <text evidence="6">In Aspergillus, the biosynthesis pathway of the sterol precursors leading to the prevalent sterol ergosterol differs from yeast. The ringsystem of lanosterol in S.cerevisiae is firstly demethylised in three enzymatic steps leading to the intermediate zymosterol and secondly a methyl group is added to zymosterol by the sterol 24-C-methyltransferase to form fecosterol. In Aspergillus, lanosterol is firstly transmethylated by the sterol 24-C-methyltransferase leading to the intermediate eburicol and secondly demethylated in three steps to form fecosterol. In the genus Schizosaccharomyces, 2 routes exist from lanosterol to erposterol: the classical one via zymosterol and the second one via the formation of eburicol followed by demethylation.</text>
</comment>
<comment type="similarity">
    <text evidence="8">Belongs to the sterol desaturase family.</text>
</comment>
<feature type="chain" id="PRO_0000117026" description="Delta(7)-sterol 5(6)-desaturase erg32">
    <location>
        <begin position="1"/>
        <end position="329"/>
    </location>
</feature>
<feature type="transmembrane region" description="Helical" evidence="3">
    <location>
        <begin position="67"/>
        <end position="87"/>
    </location>
</feature>
<feature type="transmembrane region" description="Helical" evidence="3">
    <location>
        <begin position="149"/>
        <end position="169"/>
    </location>
</feature>
<feature type="transmembrane region" description="Helical" evidence="3">
    <location>
        <begin position="210"/>
        <end position="230"/>
    </location>
</feature>
<feature type="domain" description="Fatty acid hydroxylase" evidence="3">
    <location>
        <begin position="156"/>
        <end position="281"/>
    </location>
</feature>
<feature type="short sequence motif" description="Histidine box-1">
    <location>
        <begin position="170"/>
        <end position="175"/>
    </location>
</feature>
<feature type="short sequence motif" description="Histidine box-2">
    <location>
        <begin position="183"/>
        <end position="187"/>
    </location>
</feature>
<feature type="short sequence motif" description="Histidine box-3">
    <location>
        <begin position="257"/>
        <end position="262"/>
    </location>
</feature>
<keyword id="KW-0256">Endoplasmic reticulum</keyword>
<keyword id="KW-0333">Golgi apparatus</keyword>
<keyword id="KW-0408">Iron</keyword>
<keyword id="KW-0444">Lipid biosynthesis</keyword>
<keyword id="KW-0443">Lipid metabolism</keyword>
<keyword id="KW-0472">Membrane</keyword>
<keyword id="KW-0560">Oxidoreductase</keyword>
<keyword id="KW-1185">Reference proteome</keyword>
<keyword id="KW-0752">Steroid biosynthesis</keyword>
<keyword id="KW-0753">Steroid metabolism</keyword>
<keyword id="KW-0756">Sterol biosynthesis</keyword>
<keyword id="KW-1207">Sterol metabolism</keyword>
<keyword id="KW-0812">Transmembrane</keyword>
<keyword id="KW-1133">Transmembrane helix</keyword>
<evidence type="ECO:0000250" key="1">
    <source>
        <dbReference type="UniProtKB" id="P32353"/>
    </source>
</evidence>
<evidence type="ECO:0000250" key="2">
    <source>
        <dbReference type="UniProtKB" id="P53045"/>
    </source>
</evidence>
<evidence type="ECO:0000255" key="3"/>
<evidence type="ECO:0000269" key="4">
    <source>
    </source>
</evidence>
<evidence type="ECO:0000269" key="5">
    <source>
    </source>
</evidence>
<evidence type="ECO:0000269" key="6">
    <source>
    </source>
</evidence>
<evidence type="ECO:0000303" key="7">
    <source>
    </source>
</evidence>
<evidence type="ECO:0000305" key="8"/>
<evidence type="ECO:0000305" key="9">
    <source>
    </source>
</evidence>
<evidence type="ECO:0000305" key="10">
    <source>
    </source>
</evidence>
<dbReference type="EC" id="1.14.19.20" evidence="9"/>
<dbReference type="EMBL" id="AB004539">
    <property type="protein sequence ID" value="BAA21457.1"/>
    <property type="molecule type" value="Genomic_DNA"/>
</dbReference>
<dbReference type="EMBL" id="CU329671">
    <property type="protein sequence ID" value="CAA16898.1"/>
    <property type="molecule type" value="Genomic_DNA"/>
</dbReference>
<dbReference type="PIR" id="T40027">
    <property type="entry name" value="T40027"/>
</dbReference>
<dbReference type="RefSeq" id="NP_001018791.2">
    <property type="nucleotide sequence ID" value="NM_001021446.3"/>
</dbReference>
<dbReference type="BioGRID" id="280342">
    <property type="interactions" value="1"/>
</dbReference>
<dbReference type="FunCoup" id="O13666">
    <property type="interactions" value="74"/>
</dbReference>
<dbReference type="STRING" id="284812.O13666"/>
<dbReference type="iPTMnet" id="O13666"/>
<dbReference type="PaxDb" id="4896-SPBC27B12.03c.1"/>
<dbReference type="EnsemblFungi" id="SPBC27B12.03c.1">
    <property type="protein sequence ID" value="SPBC27B12.03c.1:pep"/>
    <property type="gene ID" value="SPBC27B12.03c"/>
</dbReference>
<dbReference type="GeneID" id="3361266"/>
<dbReference type="KEGG" id="spo:3361266"/>
<dbReference type="PomBase" id="SPBC27B12.03c">
    <property type="gene designation" value="erg32"/>
</dbReference>
<dbReference type="VEuPathDB" id="FungiDB:SPBC27B12.03c"/>
<dbReference type="eggNOG" id="KOG0872">
    <property type="taxonomic scope" value="Eukaryota"/>
</dbReference>
<dbReference type="HOGENOM" id="CLU_047036_3_1_1"/>
<dbReference type="InParanoid" id="O13666"/>
<dbReference type="OMA" id="YFSNNAV"/>
<dbReference type="PhylomeDB" id="O13666"/>
<dbReference type="BRENDA" id="1.14.19.20">
    <property type="organism ID" value="1577"/>
</dbReference>
<dbReference type="Reactome" id="R-SPO-6807047">
    <property type="pathway name" value="Cholesterol biosynthesis via desmosterol"/>
</dbReference>
<dbReference type="Reactome" id="R-SPO-6807062">
    <property type="pathway name" value="Cholesterol biosynthesis via lathosterol"/>
</dbReference>
<dbReference type="UniPathway" id="UPA00768"/>
<dbReference type="PRO" id="PR:O13666"/>
<dbReference type="Proteomes" id="UP000002485">
    <property type="component" value="Chromosome II"/>
</dbReference>
<dbReference type="GO" id="GO:0005783">
    <property type="term" value="C:endoplasmic reticulum"/>
    <property type="evidence" value="ECO:0007005"/>
    <property type="project" value="PomBase"/>
</dbReference>
<dbReference type="GO" id="GO:0005789">
    <property type="term" value="C:endoplasmic reticulum membrane"/>
    <property type="evidence" value="ECO:0000305"/>
    <property type="project" value="PomBase"/>
</dbReference>
<dbReference type="GO" id="GO:0005794">
    <property type="term" value="C:Golgi apparatus"/>
    <property type="evidence" value="ECO:0007005"/>
    <property type="project" value="PomBase"/>
</dbReference>
<dbReference type="GO" id="GO:0000139">
    <property type="term" value="C:Golgi membrane"/>
    <property type="evidence" value="ECO:0007669"/>
    <property type="project" value="UniProtKB-SubCell"/>
</dbReference>
<dbReference type="GO" id="GO:0016020">
    <property type="term" value="C:membrane"/>
    <property type="evidence" value="ECO:0000318"/>
    <property type="project" value="GO_Central"/>
</dbReference>
<dbReference type="GO" id="GO:0000248">
    <property type="term" value="F:C-5 sterol desaturase activity"/>
    <property type="evidence" value="ECO:0000318"/>
    <property type="project" value="GO_Central"/>
</dbReference>
<dbReference type="GO" id="GO:0050046">
    <property type="term" value="F:delta7-sterol 5(6)-desaturase activity"/>
    <property type="evidence" value="ECO:0007669"/>
    <property type="project" value="UniProtKB-EC"/>
</dbReference>
<dbReference type="GO" id="GO:0005506">
    <property type="term" value="F:iron ion binding"/>
    <property type="evidence" value="ECO:0000255"/>
    <property type="project" value="PomBase"/>
</dbReference>
<dbReference type="GO" id="GO:0006696">
    <property type="term" value="P:ergosterol biosynthetic process"/>
    <property type="evidence" value="ECO:0000315"/>
    <property type="project" value="PomBase"/>
</dbReference>
<dbReference type="GO" id="GO:0016126">
    <property type="term" value="P:sterol biosynthetic process"/>
    <property type="evidence" value="ECO:0000318"/>
    <property type="project" value="GO_Central"/>
</dbReference>
<dbReference type="InterPro" id="IPR006694">
    <property type="entry name" value="Fatty_acid_hydroxylase"/>
</dbReference>
<dbReference type="InterPro" id="IPR050307">
    <property type="entry name" value="Sterol_Desaturase_Related"/>
</dbReference>
<dbReference type="PANTHER" id="PTHR11863">
    <property type="entry name" value="STEROL DESATURASE"/>
    <property type="match status" value="1"/>
</dbReference>
<dbReference type="Pfam" id="PF04116">
    <property type="entry name" value="FA_hydroxylase"/>
    <property type="match status" value="1"/>
</dbReference>
<gene>
    <name evidence="7" type="primary">erg32</name>
    <name type="ORF">pi075</name>
    <name type="ORF">SPBC27B12.03c</name>
</gene>
<protein>
    <recommendedName>
        <fullName evidence="7">Delta(7)-sterol 5(6)-desaturase erg32</fullName>
        <ecNumber evidence="9">1.14.19.20</ecNumber>
    </recommendedName>
    <alternativeName>
        <fullName evidence="7">C-5 sterol desaturase erg32</fullName>
    </alternativeName>
    <alternativeName>
        <fullName evidence="8">Ergosterol Delta(5,6) desaturase erg32</fullName>
    </alternativeName>
    <alternativeName>
        <fullName evidence="7">Ergosterol biosynthetic protein 32</fullName>
    </alternativeName>
    <alternativeName>
        <fullName evidence="7">Sterol-C5-desaturase erg32</fullName>
    </alternativeName>
</protein>
<reference key="1">
    <citation type="journal article" date="2000" name="Yeast">
        <title>A 38 kb segment containing the cdc2 gene from the left arm of fission yeast chromosome II: sequence analysis and characterization of the genomic DNA and cDNAs encoded on the segment.</title>
        <authorList>
            <person name="Machida M."/>
            <person name="Yamazaki S."/>
            <person name="Kunihiro S."/>
            <person name="Tanaka T."/>
            <person name="Kushida N."/>
            <person name="Jinno K."/>
            <person name="Haikawa Y."/>
            <person name="Yamazaki J."/>
            <person name="Yamamoto S."/>
            <person name="Sekine M."/>
            <person name="Oguchi A."/>
            <person name="Nagai Y."/>
            <person name="Sakai M."/>
            <person name="Aoki K."/>
            <person name="Ogura K."/>
            <person name="Kudoh Y."/>
            <person name="Kikuchi H."/>
            <person name="Zhang M.Q."/>
            <person name="Yanagida M."/>
        </authorList>
    </citation>
    <scope>NUCLEOTIDE SEQUENCE [LARGE SCALE GENOMIC DNA]</scope>
    <source>
        <strain>972 / ATCC 24843</strain>
    </source>
</reference>
<reference key="2">
    <citation type="journal article" date="2002" name="Nature">
        <title>The genome sequence of Schizosaccharomyces pombe.</title>
        <authorList>
            <person name="Wood V."/>
            <person name="Gwilliam R."/>
            <person name="Rajandream M.A."/>
            <person name="Lyne M.H."/>
            <person name="Lyne R."/>
            <person name="Stewart A."/>
            <person name="Sgouros J.G."/>
            <person name="Peat N."/>
            <person name="Hayles J."/>
            <person name="Baker S.G."/>
            <person name="Basham D."/>
            <person name="Bowman S."/>
            <person name="Brooks K."/>
            <person name="Brown D."/>
            <person name="Brown S."/>
            <person name="Chillingworth T."/>
            <person name="Churcher C.M."/>
            <person name="Collins M."/>
            <person name="Connor R."/>
            <person name="Cronin A."/>
            <person name="Davis P."/>
            <person name="Feltwell T."/>
            <person name="Fraser A."/>
            <person name="Gentles S."/>
            <person name="Goble A."/>
            <person name="Hamlin N."/>
            <person name="Harris D.E."/>
            <person name="Hidalgo J."/>
            <person name="Hodgson G."/>
            <person name="Holroyd S."/>
            <person name="Hornsby T."/>
            <person name="Howarth S."/>
            <person name="Huckle E.J."/>
            <person name="Hunt S."/>
            <person name="Jagels K."/>
            <person name="James K.D."/>
            <person name="Jones L."/>
            <person name="Jones M."/>
            <person name="Leather S."/>
            <person name="McDonald S."/>
            <person name="McLean J."/>
            <person name="Mooney P."/>
            <person name="Moule S."/>
            <person name="Mungall K.L."/>
            <person name="Murphy L.D."/>
            <person name="Niblett D."/>
            <person name="Odell C."/>
            <person name="Oliver K."/>
            <person name="O'Neil S."/>
            <person name="Pearson D."/>
            <person name="Quail M.A."/>
            <person name="Rabbinowitsch E."/>
            <person name="Rutherford K.M."/>
            <person name="Rutter S."/>
            <person name="Saunders D."/>
            <person name="Seeger K."/>
            <person name="Sharp S."/>
            <person name="Skelton J."/>
            <person name="Simmonds M.N."/>
            <person name="Squares R."/>
            <person name="Squares S."/>
            <person name="Stevens K."/>
            <person name="Taylor K."/>
            <person name="Taylor R.G."/>
            <person name="Tivey A."/>
            <person name="Walsh S.V."/>
            <person name="Warren T."/>
            <person name="Whitehead S."/>
            <person name="Woodward J.R."/>
            <person name="Volckaert G."/>
            <person name="Aert R."/>
            <person name="Robben J."/>
            <person name="Grymonprez B."/>
            <person name="Weltjens I."/>
            <person name="Vanstreels E."/>
            <person name="Rieger M."/>
            <person name="Schaefer M."/>
            <person name="Mueller-Auer S."/>
            <person name="Gabel C."/>
            <person name="Fuchs M."/>
            <person name="Duesterhoeft A."/>
            <person name="Fritzc C."/>
            <person name="Holzer E."/>
            <person name="Moestl D."/>
            <person name="Hilbert H."/>
            <person name="Borzym K."/>
            <person name="Langer I."/>
            <person name="Beck A."/>
            <person name="Lehrach H."/>
            <person name="Reinhardt R."/>
            <person name="Pohl T.M."/>
            <person name="Eger P."/>
            <person name="Zimmermann W."/>
            <person name="Wedler H."/>
            <person name="Wambutt R."/>
            <person name="Purnelle B."/>
            <person name="Goffeau A."/>
            <person name="Cadieu E."/>
            <person name="Dreano S."/>
            <person name="Gloux S."/>
            <person name="Lelaure V."/>
            <person name="Mottier S."/>
            <person name="Galibert F."/>
            <person name="Aves S.J."/>
            <person name="Xiang Z."/>
            <person name="Hunt C."/>
            <person name="Moore K."/>
            <person name="Hurst S.M."/>
            <person name="Lucas M."/>
            <person name="Rochet M."/>
            <person name="Gaillardin C."/>
            <person name="Tallada V.A."/>
            <person name="Garzon A."/>
            <person name="Thode G."/>
            <person name="Daga R.R."/>
            <person name="Cruzado L."/>
            <person name="Jimenez J."/>
            <person name="Sanchez M."/>
            <person name="del Rey F."/>
            <person name="Benito J."/>
            <person name="Dominguez A."/>
            <person name="Revuelta J.L."/>
            <person name="Moreno S."/>
            <person name="Armstrong J."/>
            <person name="Forsburg S.L."/>
            <person name="Cerutti L."/>
            <person name="Lowe T."/>
            <person name="McCombie W.R."/>
            <person name="Paulsen I."/>
            <person name="Potashkin J."/>
            <person name="Shpakovski G.V."/>
            <person name="Ussery D."/>
            <person name="Barrell B.G."/>
            <person name="Nurse P."/>
        </authorList>
    </citation>
    <scope>NUCLEOTIDE SEQUENCE [LARGE SCALE GENOMIC DNA]</scope>
    <source>
        <strain>972 / ATCC 24843</strain>
    </source>
</reference>
<reference key="3">
    <citation type="journal article" date="1995" name="FEMS Microbiol. Lett.">
        <title>Identification of 24-methylene-24,25-dihydrolanosterol as a precursor of ergosterol in the yeasts Schizosaccharomyces pombe and Schizosaccharomyces octosporus.</title>
        <authorList>
            <person name="Harmouch N."/>
            <person name="Coulon J."/>
            <person name="Bonaly R."/>
        </authorList>
    </citation>
    <scope>FUNCTION</scope>
</reference>
<reference key="4">
    <citation type="journal article" date="2006" name="Nat. Biotechnol.">
        <title>ORFeome cloning and global analysis of protein localization in the fission yeast Schizosaccharomyces pombe.</title>
        <authorList>
            <person name="Matsuyama A."/>
            <person name="Arai R."/>
            <person name="Yashiroda Y."/>
            <person name="Shirai A."/>
            <person name="Kamata A."/>
            <person name="Sekido S."/>
            <person name="Kobayashi Y."/>
            <person name="Hashimoto A."/>
            <person name="Hamamoto M."/>
            <person name="Hiraoka Y."/>
            <person name="Horinouchi S."/>
            <person name="Yoshida M."/>
        </authorList>
    </citation>
    <scope>SUBCELLULAR LOCATION [LARGE SCALE ANALYSIS]</scope>
</reference>
<reference key="5">
    <citation type="journal article" date="2008" name="Microbiology">
        <title>Multiple functions of ergosterol in the fission yeast Schizosaccharomyces pombe.</title>
        <authorList>
            <person name="Iwaki T."/>
            <person name="Iefuji H."/>
            <person name="Hiraga Y."/>
            <person name="Hosomi A."/>
            <person name="Morita T."/>
            <person name="Giga-Hama Y."/>
            <person name="Takegawa K."/>
        </authorList>
    </citation>
    <scope>FUNCTION</scope>
    <scope>DISRUPTION PHENOTYPE</scope>
    <scope>PATHWAY</scope>
</reference>
<accession>O13666</accession>
<organism>
    <name type="scientific">Schizosaccharomyces pombe (strain 972 / ATCC 24843)</name>
    <name type="common">Fission yeast</name>
    <dbReference type="NCBI Taxonomy" id="284812"/>
    <lineage>
        <taxon>Eukaryota</taxon>
        <taxon>Fungi</taxon>
        <taxon>Dikarya</taxon>
        <taxon>Ascomycota</taxon>
        <taxon>Taphrinomycotina</taxon>
        <taxon>Schizosaccharomycetes</taxon>
        <taxon>Schizosaccharomycetales</taxon>
        <taxon>Schizosaccharomycetaceae</taxon>
        <taxon>Schizosaccharomyces</taxon>
    </lineage>
</organism>
<sequence>MDVVLQYADKYVFDTFYGKIAESFDSSSSFANTAVNSTTLGLAEKVNFAITSGLLDRNNVWRQFTSLFLITWIMGTLSYFLSASFAYYVYFDREEARRHPKFLKNQEHLELMVALKNLPGMAILTAPWFLAEIRGYGYVYDKLDEYGYFYLFFSIALFLLFSDFLIYWIHRALHHRWLYAPLHKLHHKWIVPTPYSSHAFHYLDGYSQSLPYHMFPFFFPLNKYVYLLLFGSVNYWTVLIHDGKYFSNNAVVNGAAHHAAHHMYFNYNYGQFFTLFDRLCSSYRQPDQELFDAELRNEKLQEQRIRFMETVQYTVEGKDDRTYASKKDN</sequence>
<name>ERG3B_SCHPO</name>